<feature type="chain" id="PRO_0000302559" description="Acyl-[acyl-carrier-protein]--UDP-N-acetylglucosamine O-acyltransferase">
    <location>
        <begin position="1"/>
        <end position="263"/>
    </location>
</feature>
<keyword id="KW-0012">Acyltransferase</keyword>
<keyword id="KW-0963">Cytoplasm</keyword>
<keyword id="KW-0441">Lipid A biosynthesis</keyword>
<keyword id="KW-0444">Lipid biosynthesis</keyword>
<keyword id="KW-0443">Lipid metabolism</keyword>
<keyword id="KW-0677">Repeat</keyword>
<keyword id="KW-0808">Transferase</keyword>
<protein>
    <recommendedName>
        <fullName evidence="1">Acyl-[acyl-carrier-protein]--UDP-N-acetylglucosamine O-acyltransferase</fullName>
        <shortName evidence="1">UDP-N-acetylglucosamine acyltransferase</shortName>
        <ecNumber evidence="1">2.3.1.129</ecNumber>
    </recommendedName>
</protein>
<comment type="function">
    <text evidence="1">Involved in the biosynthesis of lipid A, a phosphorylated glycolipid that anchors the lipopolysaccharide to the outer membrane of the cell.</text>
</comment>
<comment type="catalytic activity">
    <reaction evidence="1">
        <text>a (3R)-hydroxyacyl-[ACP] + UDP-N-acetyl-alpha-D-glucosamine = a UDP-3-O-[(3R)-3-hydroxyacyl]-N-acetyl-alpha-D-glucosamine + holo-[ACP]</text>
        <dbReference type="Rhea" id="RHEA:67812"/>
        <dbReference type="Rhea" id="RHEA-COMP:9685"/>
        <dbReference type="Rhea" id="RHEA-COMP:9945"/>
        <dbReference type="ChEBI" id="CHEBI:57705"/>
        <dbReference type="ChEBI" id="CHEBI:64479"/>
        <dbReference type="ChEBI" id="CHEBI:78827"/>
        <dbReference type="ChEBI" id="CHEBI:173225"/>
        <dbReference type="EC" id="2.3.1.129"/>
    </reaction>
</comment>
<comment type="pathway">
    <text evidence="1">Glycolipid biosynthesis; lipid IV(A) biosynthesis; lipid IV(A) from (3R)-3-hydroxytetradecanoyl-[acyl-carrier-protein] and UDP-N-acetyl-alpha-D-glucosamine: step 1/6.</text>
</comment>
<comment type="subunit">
    <text evidence="1">Homotrimer.</text>
</comment>
<comment type="subcellular location">
    <subcellularLocation>
        <location evidence="1">Cytoplasm</location>
    </subcellularLocation>
</comment>
<comment type="similarity">
    <text evidence="1">Belongs to the transferase hexapeptide repeat family. LpxA subfamily.</text>
</comment>
<dbReference type="EC" id="2.3.1.129" evidence="1"/>
<dbReference type="EMBL" id="CP000644">
    <property type="protein sequence ID" value="ABO91142.1"/>
    <property type="molecule type" value="Genomic_DNA"/>
</dbReference>
<dbReference type="SMR" id="A4SQH0"/>
<dbReference type="STRING" id="29491.GCA_000820065_03528"/>
<dbReference type="KEGG" id="asa:ASA_3148"/>
<dbReference type="eggNOG" id="COG1043">
    <property type="taxonomic scope" value="Bacteria"/>
</dbReference>
<dbReference type="HOGENOM" id="CLU_061249_0_0_6"/>
<dbReference type="UniPathway" id="UPA00359">
    <property type="reaction ID" value="UER00477"/>
</dbReference>
<dbReference type="Proteomes" id="UP000000225">
    <property type="component" value="Chromosome"/>
</dbReference>
<dbReference type="GO" id="GO:0005737">
    <property type="term" value="C:cytoplasm"/>
    <property type="evidence" value="ECO:0007669"/>
    <property type="project" value="UniProtKB-SubCell"/>
</dbReference>
<dbReference type="GO" id="GO:0016020">
    <property type="term" value="C:membrane"/>
    <property type="evidence" value="ECO:0007669"/>
    <property type="project" value="GOC"/>
</dbReference>
<dbReference type="GO" id="GO:0008780">
    <property type="term" value="F:acyl-[acyl-carrier-protein]-UDP-N-acetylglucosamine O-acyltransferase activity"/>
    <property type="evidence" value="ECO:0007669"/>
    <property type="project" value="UniProtKB-UniRule"/>
</dbReference>
<dbReference type="GO" id="GO:0009245">
    <property type="term" value="P:lipid A biosynthetic process"/>
    <property type="evidence" value="ECO:0007669"/>
    <property type="project" value="UniProtKB-UniRule"/>
</dbReference>
<dbReference type="CDD" id="cd03351">
    <property type="entry name" value="LbH_UDP-GlcNAc_AT"/>
    <property type="match status" value="1"/>
</dbReference>
<dbReference type="Gene3D" id="2.160.10.10">
    <property type="entry name" value="Hexapeptide repeat proteins"/>
    <property type="match status" value="1"/>
</dbReference>
<dbReference type="Gene3D" id="1.20.1180.10">
    <property type="entry name" value="Udp N-acetylglucosamine O-acyltransferase, C-terminal domain"/>
    <property type="match status" value="1"/>
</dbReference>
<dbReference type="HAMAP" id="MF_00387">
    <property type="entry name" value="LpxA"/>
    <property type="match status" value="1"/>
</dbReference>
<dbReference type="InterPro" id="IPR029098">
    <property type="entry name" value="Acetyltransf_C"/>
</dbReference>
<dbReference type="InterPro" id="IPR037157">
    <property type="entry name" value="Acetyltransf_C_sf"/>
</dbReference>
<dbReference type="InterPro" id="IPR001451">
    <property type="entry name" value="Hexapep"/>
</dbReference>
<dbReference type="InterPro" id="IPR010137">
    <property type="entry name" value="Lipid_A_LpxA"/>
</dbReference>
<dbReference type="InterPro" id="IPR011004">
    <property type="entry name" value="Trimer_LpxA-like_sf"/>
</dbReference>
<dbReference type="NCBIfam" id="TIGR01852">
    <property type="entry name" value="lipid_A_lpxA"/>
    <property type="match status" value="1"/>
</dbReference>
<dbReference type="NCBIfam" id="NF003657">
    <property type="entry name" value="PRK05289.1"/>
    <property type="match status" value="1"/>
</dbReference>
<dbReference type="PANTHER" id="PTHR43480">
    <property type="entry name" value="ACYL-[ACYL-CARRIER-PROTEIN]--UDP-N-ACETYLGLUCOSAMINE O-ACYLTRANSFERASE"/>
    <property type="match status" value="1"/>
</dbReference>
<dbReference type="PANTHER" id="PTHR43480:SF1">
    <property type="entry name" value="ACYL-[ACYL-CARRIER-PROTEIN]--UDP-N-ACETYLGLUCOSAMINE O-ACYLTRANSFERASE, MITOCHONDRIAL-RELATED"/>
    <property type="match status" value="1"/>
</dbReference>
<dbReference type="Pfam" id="PF13720">
    <property type="entry name" value="Acetyltransf_11"/>
    <property type="match status" value="1"/>
</dbReference>
<dbReference type="Pfam" id="PF00132">
    <property type="entry name" value="Hexapep"/>
    <property type="match status" value="1"/>
</dbReference>
<dbReference type="PIRSF" id="PIRSF000456">
    <property type="entry name" value="UDP-GlcNAc_acltr"/>
    <property type="match status" value="1"/>
</dbReference>
<dbReference type="SUPFAM" id="SSF51161">
    <property type="entry name" value="Trimeric LpxA-like enzymes"/>
    <property type="match status" value="1"/>
</dbReference>
<organism>
    <name type="scientific">Aeromonas salmonicida (strain A449)</name>
    <dbReference type="NCBI Taxonomy" id="382245"/>
    <lineage>
        <taxon>Bacteria</taxon>
        <taxon>Pseudomonadati</taxon>
        <taxon>Pseudomonadota</taxon>
        <taxon>Gammaproteobacteria</taxon>
        <taxon>Aeromonadales</taxon>
        <taxon>Aeromonadaceae</taxon>
        <taxon>Aeromonas</taxon>
    </lineage>
</organism>
<accession>A4SQH0</accession>
<name>LPXA_AERS4</name>
<gene>
    <name evidence="1" type="primary">lpxA</name>
    <name type="ordered locus">ASA_3148</name>
</gene>
<proteinExistence type="inferred from homology"/>
<evidence type="ECO:0000255" key="1">
    <source>
        <dbReference type="HAMAP-Rule" id="MF_00387"/>
    </source>
</evidence>
<reference key="1">
    <citation type="journal article" date="2008" name="BMC Genomics">
        <title>The genome of Aeromonas salmonicida subsp. salmonicida A449: insights into the evolution of a fish pathogen.</title>
        <authorList>
            <person name="Reith M.E."/>
            <person name="Singh R.K."/>
            <person name="Curtis B."/>
            <person name="Boyd J.M."/>
            <person name="Bouevitch A."/>
            <person name="Kimball J."/>
            <person name="Munholland J."/>
            <person name="Murphy C."/>
            <person name="Sarty D."/>
            <person name="Williams J."/>
            <person name="Nash J.H."/>
            <person name="Johnson S.C."/>
            <person name="Brown L.L."/>
        </authorList>
    </citation>
    <scope>NUCLEOTIDE SEQUENCE [LARGE SCALE GENOMIC DNA]</scope>
    <source>
        <strain>A449</strain>
    </source>
</reference>
<sequence length="263" mass="28266">MIDQTAIIHDTAIVHESAVIGKGVEIGPFSVIGAEVEIGDNTWVGSHVVIKGPAKLGRGNKIFQHTSIGEDCQDKKYAGERTFLEIGDNNVFRENCTVHRGTIQDQSLTKVGSGNLFMVNVHVAHDCIIGDNCIFANNATLAGHVVIGDFVIFGGLSAIHQFGRVGSHAFIGGCAALNKDVPPYVMAAGNYAKPFGVNSEGLRRRGFSAEAISAVKRAYKEIFRSGKTVEEVLPVLTEMAATEPAVQLYVDFLKDNERGIIRA</sequence>